<organism>
    <name type="scientific">Ictalurid herpesvirus 1 (strain Auburn)</name>
    <name type="common">IcHV-1</name>
    <name type="synonym">Channel catfish herpesvirus</name>
    <dbReference type="NCBI Taxonomy" id="766178"/>
    <lineage>
        <taxon>Viruses</taxon>
        <taxon>Duplodnaviria</taxon>
        <taxon>Heunggongvirae</taxon>
        <taxon>Peploviricota</taxon>
        <taxon>Herviviricetes</taxon>
        <taxon>Herpesvirales</taxon>
        <taxon>Alloherpesviridae</taxon>
        <taxon>Ictavirus</taxon>
        <taxon>Ictavirus ictaluridallo1</taxon>
        <taxon>Ictalurid herpesvirus 1</taxon>
    </lineage>
</organism>
<name>VG63_ICHVA</name>
<organismHost>
    <name type="scientific">Ictaluridae</name>
    <name type="common">bullhead catfishes</name>
    <dbReference type="NCBI Taxonomy" id="7996"/>
</organismHost>
<feature type="chain" id="PRO_0000222141" description="Uncharacterized protein ORF63">
    <location>
        <begin position="1"/>
        <end position="662"/>
    </location>
</feature>
<proteinExistence type="predicted"/>
<protein>
    <recommendedName>
        <fullName>Uncharacterized protein ORF63</fullName>
    </recommendedName>
</protein>
<reference key="1">
    <citation type="journal article" date="1992" name="Virology">
        <title>Channel catfish virus: a new type of herpesvirus.</title>
        <authorList>
            <person name="Davison A.J."/>
        </authorList>
    </citation>
    <scope>NUCLEOTIDE SEQUENCE [LARGE SCALE GENOMIC DNA]</scope>
</reference>
<keyword id="KW-1185">Reference proteome</keyword>
<sequence>MYVVVSVEPLLAWCVVADARDDAVIKHAIRGWICATVDLQPVTLGAVFFTRIPSVGSRLVENSDFHWIVKLPIDGAQQIDTVDRWIALAGCTGGGEANVPSLLENMLFLGFEPEKTATWSAIYTMESAIYNHLLRKGVDIAFHHIIFRRFCDQLDHLGPVPIDVFEKWIPDALLNLEREYGLSIYNLDDKRNFTKFSRPRLGKVLLKRWLADNMIKTNEVSDAELLAICDPDVTPAEPATGAMDLSSLEELIMTLNSRVNIPKAGSFHRVTLRRVTFHQLIKYCLNDDPDDLSVVSLPPRNALPHVPILLMDDSMSHEGVFQYVITDYKSMETVPPGAYSEVFLEGQIVTVLNFDIDRKFSGLLDPMGAIDNICEIFVAFLHRAVEKFFNFNRVDKNRIGEVAVFVRRAALPGKFSARFTWFPAYELCFQNIREAADFTGVFQELLMEEDSFFVYTVTNDGVSTRVCAIDAQPFCRNKSCRLPNSTKMEAGEFRGAFEYIKSYNALVKSNRGYSKMNIGISRSPVAFDRPSLGPQYIFGALARFASAEVTYNSSHASENITVEKDHIDNAYKLLSTIWGDLKISPTTSGSVRLTPWMTRDRFCLVHNRIHHKAGVSVIVTNRRIYPKCFHPDPPAHVIPEGGFLDVVEVAGKPRARVGFCGQ</sequence>
<dbReference type="EMBL" id="M75136">
    <property type="protein sequence ID" value="AAA88167.1"/>
    <property type="molecule type" value="Genomic_DNA"/>
</dbReference>
<dbReference type="PIR" id="I36792">
    <property type="entry name" value="I36792"/>
</dbReference>
<dbReference type="RefSeq" id="NP_041155.1">
    <property type="nucleotide sequence ID" value="NC_001493.2"/>
</dbReference>
<dbReference type="GeneID" id="1488438"/>
<dbReference type="KEGG" id="vg:1488438"/>
<dbReference type="Proteomes" id="UP000007643">
    <property type="component" value="Segment"/>
</dbReference>
<dbReference type="GO" id="GO:0003899">
    <property type="term" value="F:DNA-directed RNA polymerase activity"/>
    <property type="evidence" value="ECO:0007669"/>
    <property type="project" value="InterPro"/>
</dbReference>
<dbReference type="GO" id="GO:0006269">
    <property type="term" value="P:DNA replication, synthesis of primer"/>
    <property type="evidence" value="ECO:0007669"/>
    <property type="project" value="InterPro"/>
</dbReference>
<dbReference type="InterPro" id="IPR002755">
    <property type="entry name" value="DNA_primase_S"/>
</dbReference>
<dbReference type="Pfam" id="PF01896">
    <property type="entry name" value="DNA_primase_S"/>
    <property type="match status" value="1"/>
</dbReference>
<dbReference type="Pfam" id="PF03121">
    <property type="entry name" value="Herpes_UL52"/>
    <property type="match status" value="1"/>
</dbReference>
<accession>Q00159</accession>
<gene>
    <name type="primary">ORF63</name>
</gene>